<protein>
    <recommendedName>
        <fullName>Ornithine carbamoyltransferase, catabolic</fullName>
        <shortName>OTCase</shortName>
        <ecNumber>2.1.3.3</ecNumber>
    </recommendedName>
</protein>
<sequence>MTSPLITKAEVNSVFQGRSLLAEKDFTPAEINYLVDFGLHLKALKQQNIPHHYLEGKNIALLFAKTSTRTRAAFTTAAIDLGAHPEYLGANDIQLGIKESTEDTARVLGSMFDAIERRGFSQKEVEDLAKYSGVPVWNGLTDDWHPTQMIADFMTVKENFGYLKGLTLVYVGDGRNNMANSLIVTGSMLGVNVHIVAPDSLHPSKEVMDIANKFAEKSGAKPLATSNIEEGVKGANIIYSDVWVSMGESNWEERVKLLTPYRITMDMLKMTGNADNGKLIFMHCLPAFHDTETEYGKEIKEKYGLTEMEVTDEVFRSKYARQFEEAENRMHSIKAIMAATLGNLFIPAVPEDFK</sequence>
<reference key="1">
    <citation type="submission" date="2000-07" db="EMBL/GenBank/DDBJ databases">
        <title>Cloning, sequencing and analysis of the genes involved in the arginine deiminase pathway of Lactococus lactis.</title>
        <authorList>
            <person name="Aungpraphapornchai P."/>
            <person name="Mulholland F."/>
            <person name="Griffin H.G."/>
            <person name="Gasson M.J."/>
        </authorList>
    </citation>
    <scope>NUCLEOTIDE SEQUENCE [GENOMIC DNA]</scope>
</reference>
<reference key="2">
    <citation type="journal article" date="2007" name="J. Bacteriol.">
        <title>The complete genome sequence of the lactic acid bacterial paradigm Lactococcus lactis subsp. cremoris MG1363.</title>
        <authorList>
            <person name="Wegmann U."/>
            <person name="O'Connell-Motherway M."/>
            <person name="Zomer A."/>
            <person name="Buist G."/>
            <person name="Shearman C."/>
            <person name="Canchaya C."/>
            <person name="Ventura M."/>
            <person name="Goesmann A."/>
            <person name="Gasson M.J."/>
            <person name="Kuipers O.P."/>
            <person name="van Sinderen D."/>
            <person name="Kok J."/>
        </authorList>
    </citation>
    <scope>NUCLEOTIDE SEQUENCE [LARGE SCALE GENOMIC DNA]</scope>
    <source>
        <strain>MG1363</strain>
    </source>
</reference>
<name>OTCC_LACLM</name>
<organism>
    <name type="scientific">Lactococcus lactis subsp. cremoris (strain MG1363)</name>
    <dbReference type="NCBI Taxonomy" id="416870"/>
    <lineage>
        <taxon>Bacteria</taxon>
        <taxon>Bacillati</taxon>
        <taxon>Bacillota</taxon>
        <taxon>Bacilli</taxon>
        <taxon>Lactobacillales</taxon>
        <taxon>Streptococcaceae</taxon>
        <taxon>Lactococcus</taxon>
        <taxon>Lactococcus cremoris subsp. cremoris</taxon>
    </lineage>
</organism>
<keyword id="KW-0056">Arginine metabolism</keyword>
<keyword id="KW-0963">Cytoplasm</keyword>
<keyword id="KW-0808">Transferase</keyword>
<proteinExistence type="inferred from homology"/>
<comment type="function">
    <text evidence="1">Reversibly catalyzes the transfer of the carbamoyl group from carbamoyl phosphate (CP) to the N(epsilon) atom of ornithine (ORN) to produce L-citrulline.</text>
</comment>
<comment type="catalytic activity">
    <reaction>
        <text>carbamoyl phosphate + L-ornithine = L-citrulline + phosphate + H(+)</text>
        <dbReference type="Rhea" id="RHEA:19513"/>
        <dbReference type="ChEBI" id="CHEBI:15378"/>
        <dbReference type="ChEBI" id="CHEBI:43474"/>
        <dbReference type="ChEBI" id="CHEBI:46911"/>
        <dbReference type="ChEBI" id="CHEBI:57743"/>
        <dbReference type="ChEBI" id="CHEBI:58228"/>
        <dbReference type="EC" id="2.1.3.3"/>
    </reaction>
</comment>
<comment type="pathway">
    <text>Amino-acid degradation; L-arginine degradation via ADI pathway; carbamoyl phosphate from L-arginine: step 2/2.</text>
</comment>
<comment type="subcellular location">
    <subcellularLocation>
        <location evidence="1">Cytoplasm</location>
    </subcellularLocation>
</comment>
<comment type="similarity">
    <text evidence="3">Belongs to the aspartate/ornithine carbamoyltransferase superfamily. OTCase family.</text>
</comment>
<dbReference type="EC" id="2.1.3.3"/>
<dbReference type="EMBL" id="AJ250129">
    <property type="protein sequence ID" value="CAB93580.1"/>
    <property type="molecule type" value="Genomic_DNA"/>
</dbReference>
<dbReference type="EMBL" id="AM406671">
    <property type="protein sequence ID" value="CAL98876.1"/>
    <property type="molecule type" value="Genomic_DNA"/>
</dbReference>
<dbReference type="RefSeq" id="WP_011677108.1">
    <property type="nucleotide sequence ID" value="NC_009004.1"/>
</dbReference>
<dbReference type="SMR" id="Q9K575"/>
<dbReference type="STRING" id="416870.llmg_2312"/>
<dbReference type="GeneID" id="61110357"/>
<dbReference type="KEGG" id="llm:llmg_2312"/>
<dbReference type="eggNOG" id="COG0078">
    <property type="taxonomic scope" value="Bacteria"/>
</dbReference>
<dbReference type="HOGENOM" id="CLU_043846_3_1_9"/>
<dbReference type="OrthoDB" id="9802587at2"/>
<dbReference type="PhylomeDB" id="Q9K575"/>
<dbReference type="UniPathway" id="UPA00254">
    <property type="reaction ID" value="UER00365"/>
</dbReference>
<dbReference type="Proteomes" id="UP000000364">
    <property type="component" value="Chromosome"/>
</dbReference>
<dbReference type="GO" id="GO:0005737">
    <property type="term" value="C:cytoplasm"/>
    <property type="evidence" value="ECO:0007669"/>
    <property type="project" value="UniProtKB-SubCell"/>
</dbReference>
<dbReference type="GO" id="GO:0016597">
    <property type="term" value="F:amino acid binding"/>
    <property type="evidence" value="ECO:0007669"/>
    <property type="project" value="InterPro"/>
</dbReference>
<dbReference type="GO" id="GO:0004585">
    <property type="term" value="F:ornithine carbamoyltransferase activity"/>
    <property type="evidence" value="ECO:0007669"/>
    <property type="project" value="UniProtKB-UniRule"/>
</dbReference>
<dbReference type="GO" id="GO:0042450">
    <property type="term" value="P:arginine biosynthetic process via ornithine"/>
    <property type="evidence" value="ECO:0007669"/>
    <property type="project" value="TreeGrafter"/>
</dbReference>
<dbReference type="GO" id="GO:0019547">
    <property type="term" value="P:arginine catabolic process to ornithine"/>
    <property type="evidence" value="ECO:0007669"/>
    <property type="project" value="UniProtKB-UniPathway"/>
</dbReference>
<dbReference type="GO" id="GO:0019240">
    <property type="term" value="P:citrulline biosynthetic process"/>
    <property type="evidence" value="ECO:0007669"/>
    <property type="project" value="TreeGrafter"/>
</dbReference>
<dbReference type="Gene3D" id="3.40.50.1370">
    <property type="entry name" value="Aspartate/ornithine carbamoyltransferase"/>
    <property type="match status" value="2"/>
</dbReference>
<dbReference type="HAMAP" id="MF_01109">
    <property type="entry name" value="OTCase"/>
    <property type="match status" value="1"/>
</dbReference>
<dbReference type="InterPro" id="IPR006132">
    <property type="entry name" value="Asp/Orn_carbamoyltranf_P-bd"/>
</dbReference>
<dbReference type="InterPro" id="IPR006130">
    <property type="entry name" value="Asp/Orn_carbamoylTrfase"/>
</dbReference>
<dbReference type="InterPro" id="IPR036901">
    <property type="entry name" value="Asp/Orn_carbamoylTrfase_sf"/>
</dbReference>
<dbReference type="InterPro" id="IPR006131">
    <property type="entry name" value="Asp_carbamoyltransf_Asp/Orn-bd"/>
</dbReference>
<dbReference type="InterPro" id="IPR002292">
    <property type="entry name" value="Orn/put_carbamltrans"/>
</dbReference>
<dbReference type="InterPro" id="IPR024904">
    <property type="entry name" value="OTCase_ArgI"/>
</dbReference>
<dbReference type="NCBIfam" id="TIGR00658">
    <property type="entry name" value="orni_carb_tr"/>
    <property type="match status" value="1"/>
</dbReference>
<dbReference type="PANTHER" id="PTHR45753:SF1">
    <property type="entry name" value="ORNITHINE CARBAMOYLTRANSFERASE, CATABOLIC"/>
    <property type="match status" value="1"/>
</dbReference>
<dbReference type="PANTHER" id="PTHR45753">
    <property type="entry name" value="ORNITHINE CARBAMOYLTRANSFERASE, MITOCHONDRIAL"/>
    <property type="match status" value="1"/>
</dbReference>
<dbReference type="Pfam" id="PF00185">
    <property type="entry name" value="OTCace"/>
    <property type="match status" value="1"/>
</dbReference>
<dbReference type="Pfam" id="PF02729">
    <property type="entry name" value="OTCace_N"/>
    <property type="match status" value="1"/>
</dbReference>
<dbReference type="PRINTS" id="PR00100">
    <property type="entry name" value="AOTCASE"/>
</dbReference>
<dbReference type="PRINTS" id="PR00102">
    <property type="entry name" value="OTCASE"/>
</dbReference>
<dbReference type="SUPFAM" id="SSF53671">
    <property type="entry name" value="Aspartate/ornithine carbamoyltransferase"/>
    <property type="match status" value="1"/>
</dbReference>
<dbReference type="PROSITE" id="PS00097">
    <property type="entry name" value="CARBAMOYLTRANSFERASE"/>
    <property type="match status" value="1"/>
</dbReference>
<gene>
    <name type="primary">arcB</name>
    <name type="ordered locus">llmg_2312</name>
</gene>
<accession>Q9K575</accession>
<accession>A2RNI6</accession>
<evidence type="ECO:0000250" key="1"/>
<evidence type="ECO:0000255" key="2">
    <source>
        <dbReference type="HAMAP-Rule" id="MF_01109"/>
    </source>
</evidence>
<evidence type="ECO:0000305" key="3"/>
<feature type="chain" id="PRO_0000112936" description="Ornithine carbamoyltransferase, catabolic">
    <location>
        <begin position="1"/>
        <end position="354"/>
    </location>
</feature>
<feature type="binding site" evidence="2">
    <location>
        <begin position="67"/>
        <end position="70"/>
    </location>
    <ligand>
        <name>carbamoyl phosphate</name>
        <dbReference type="ChEBI" id="CHEBI:58228"/>
    </ligand>
</feature>
<feature type="binding site" evidence="2">
    <location>
        <position position="94"/>
    </location>
    <ligand>
        <name>carbamoyl phosphate</name>
        <dbReference type="ChEBI" id="CHEBI:58228"/>
    </ligand>
</feature>
<feature type="binding site" evidence="2">
    <location>
        <position position="118"/>
    </location>
    <ligand>
        <name>carbamoyl phosphate</name>
        <dbReference type="ChEBI" id="CHEBI:58228"/>
    </ligand>
</feature>
<feature type="binding site" evidence="2">
    <location>
        <begin position="145"/>
        <end position="148"/>
    </location>
    <ligand>
        <name>carbamoyl phosphate</name>
        <dbReference type="ChEBI" id="CHEBI:58228"/>
    </ligand>
</feature>
<feature type="binding site" evidence="2">
    <location>
        <position position="177"/>
    </location>
    <ligand>
        <name>L-ornithine</name>
        <dbReference type="ChEBI" id="CHEBI:46911"/>
    </ligand>
</feature>
<feature type="binding site" evidence="2">
    <location>
        <position position="241"/>
    </location>
    <ligand>
        <name>L-ornithine</name>
        <dbReference type="ChEBI" id="CHEBI:46911"/>
    </ligand>
</feature>
<feature type="binding site" evidence="2">
    <location>
        <begin position="245"/>
        <end position="246"/>
    </location>
    <ligand>
        <name>L-ornithine</name>
        <dbReference type="ChEBI" id="CHEBI:46911"/>
    </ligand>
</feature>
<feature type="binding site" evidence="2">
    <location>
        <begin position="284"/>
        <end position="285"/>
    </location>
    <ligand>
        <name>carbamoyl phosphate</name>
        <dbReference type="ChEBI" id="CHEBI:58228"/>
    </ligand>
</feature>
<feature type="binding site" evidence="2">
    <location>
        <position position="329"/>
    </location>
    <ligand>
        <name>carbamoyl phosphate</name>
        <dbReference type="ChEBI" id="CHEBI:58228"/>
    </ligand>
</feature>